<reference key="1">
    <citation type="journal article" date="2005" name="Genome Res.">
        <title>Comparative and functional genomic analyses of the pathogenicity of phytopathogen Xanthomonas campestris pv. campestris.</title>
        <authorList>
            <person name="Qian W."/>
            <person name="Jia Y."/>
            <person name="Ren S.-X."/>
            <person name="He Y.-Q."/>
            <person name="Feng J.-X."/>
            <person name="Lu L.-F."/>
            <person name="Sun Q."/>
            <person name="Ying G."/>
            <person name="Tang D.-J."/>
            <person name="Tang H."/>
            <person name="Wu W."/>
            <person name="Hao P."/>
            <person name="Wang L."/>
            <person name="Jiang B.-L."/>
            <person name="Zeng S."/>
            <person name="Gu W.-Y."/>
            <person name="Lu G."/>
            <person name="Rong L."/>
            <person name="Tian Y."/>
            <person name="Yao Z."/>
            <person name="Fu G."/>
            <person name="Chen B."/>
            <person name="Fang R."/>
            <person name="Qiang B."/>
            <person name="Chen Z."/>
            <person name="Zhao G.-P."/>
            <person name="Tang J.-L."/>
            <person name="He C."/>
        </authorList>
    </citation>
    <scope>NUCLEOTIDE SEQUENCE [LARGE SCALE GENOMIC DNA]</scope>
    <source>
        <strain>8004</strain>
    </source>
</reference>
<sequence length="362" mass="37962">MLKVGSSLLAADGGGLSPRFALGLAQFVSANLAAGREVVIVSSGAVAAGRAILPKAAEAGAAIAARQALAALGQAQLIALWQRFFERPVAQVLLTHDDLRNRRRYLNARATLGELLRLGALPVINENDTVSVDELKLGDNDNLAAIVAALVDADALFIATDIDGLYSADPRSNPLARPLDEVAELSAEVLAMAGGSGSSVGTGGMRTKLEAAAKAGAAGIETYLFNGRSAEVVRGLAQDRLCGTRIHAARTRIAARKYWLRHAPVEPGTILIDAGAALALTDKGASLLPGGVAGAEGDFRRGDMVEIHLRDSVGSRCLARGVSQYSALDVRRIARRHSREIEPILGYSYGENVVHRDDLVVL</sequence>
<evidence type="ECO:0000255" key="1">
    <source>
        <dbReference type="HAMAP-Rule" id="MF_00456"/>
    </source>
</evidence>
<comment type="function">
    <text evidence="1">Catalyzes the transfer of a phosphate group to glutamate to form L-glutamate 5-phosphate.</text>
</comment>
<comment type="catalytic activity">
    <reaction evidence="1">
        <text>L-glutamate + ATP = L-glutamyl 5-phosphate + ADP</text>
        <dbReference type="Rhea" id="RHEA:14877"/>
        <dbReference type="ChEBI" id="CHEBI:29985"/>
        <dbReference type="ChEBI" id="CHEBI:30616"/>
        <dbReference type="ChEBI" id="CHEBI:58274"/>
        <dbReference type="ChEBI" id="CHEBI:456216"/>
        <dbReference type="EC" id="2.7.2.11"/>
    </reaction>
</comment>
<comment type="pathway">
    <text evidence="1">Amino-acid biosynthesis; L-proline biosynthesis; L-glutamate 5-semialdehyde from L-glutamate: step 1/2.</text>
</comment>
<comment type="subcellular location">
    <subcellularLocation>
        <location evidence="1">Cytoplasm</location>
    </subcellularLocation>
</comment>
<comment type="similarity">
    <text evidence="1">Belongs to the glutamate 5-kinase family.</text>
</comment>
<accession>Q4UVI1</accession>
<gene>
    <name evidence="1" type="primary">proB</name>
    <name type="ordered locus">XC_1879</name>
</gene>
<dbReference type="EC" id="2.7.2.11" evidence="1"/>
<dbReference type="EMBL" id="CP000050">
    <property type="protein sequence ID" value="AAY48942.1"/>
    <property type="molecule type" value="Genomic_DNA"/>
</dbReference>
<dbReference type="SMR" id="Q4UVI1"/>
<dbReference type="KEGG" id="xcb:XC_1879"/>
<dbReference type="HOGENOM" id="CLU_025400_2_0_6"/>
<dbReference type="UniPathway" id="UPA00098">
    <property type="reaction ID" value="UER00359"/>
</dbReference>
<dbReference type="Proteomes" id="UP000000420">
    <property type="component" value="Chromosome"/>
</dbReference>
<dbReference type="GO" id="GO:0005829">
    <property type="term" value="C:cytosol"/>
    <property type="evidence" value="ECO:0007669"/>
    <property type="project" value="TreeGrafter"/>
</dbReference>
<dbReference type="GO" id="GO:0005524">
    <property type="term" value="F:ATP binding"/>
    <property type="evidence" value="ECO:0007669"/>
    <property type="project" value="UniProtKB-KW"/>
</dbReference>
<dbReference type="GO" id="GO:0004349">
    <property type="term" value="F:glutamate 5-kinase activity"/>
    <property type="evidence" value="ECO:0007669"/>
    <property type="project" value="UniProtKB-UniRule"/>
</dbReference>
<dbReference type="GO" id="GO:0003723">
    <property type="term" value="F:RNA binding"/>
    <property type="evidence" value="ECO:0007669"/>
    <property type="project" value="InterPro"/>
</dbReference>
<dbReference type="GO" id="GO:0055129">
    <property type="term" value="P:L-proline biosynthetic process"/>
    <property type="evidence" value="ECO:0007669"/>
    <property type="project" value="UniProtKB-UniRule"/>
</dbReference>
<dbReference type="CDD" id="cd04242">
    <property type="entry name" value="AAK_G5K_ProB"/>
    <property type="match status" value="1"/>
</dbReference>
<dbReference type="CDD" id="cd21157">
    <property type="entry name" value="PUA_G5K"/>
    <property type="match status" value="1"/>
</dbReference>
<dbReference type="FunFam" id="2.30.130.10:FF:000007">
    <property type="entry name" value="Glutamate 5-kinase"/>
    <property type="match status" value="1"/>
</dbReference>
<dbReference type="FunFam" id="3.40.1160.10:FF:000018">
    <property type="entry name" value="Glutamate 5-kinase"/>
    <property type="match status" value="1"/>
</dbReference>
<dbReference type="Gene3D" id="3.40.1160.10">
    <property type="entry name" value="Acetylglutamate kinase-like"/>
    <property type="match status" value="1"/>
</dbReference>
<dbReference type="Gene3D" id="2.30.130.10">
    <property type="entry name" value="PUA domain"/>
    <property type="match status" value="1"/>
</dbReference>
<dbReference type="HAMAP" id="MF_00456">
    <property type="entry name" value="ProB"/>
    <property type="match status" value="1"/>
</dbReference>
<dbReference type="InterPro" id="IPR036393">
    <property type="entry name" value="AceGlu_kinase-like_sf"/>
</dbReference>
<dbReference type="InterPro" id="IPR001048">
    <property type="entry name" value="Asp/Glu/Uridylate_kinase"/>
</dbReference>
<dbReference type="InterPro" id="IPR041739">
    <property type="entry name" value="G5K_ProB"/>
</dbReference>
<dbReference type="InterPro" id="IPR001057">
    <property type="entry name" value="Glu/AcGlu_kinase"/>
</dbReference>
<dbReference type="InterPro" id="IPR011529">
    <property type="entry name" value="Glu_5kinase"/>
</dbReference>
<dbReference type="InterPro" id="IPR005715">
    <property type="entry name" value="Glu_5kinase/COase_Synthase"/>
</dbReference>
<dbReference type="InterPro" id="IPR019797">
    <property type="entry name" value="Glutamate_5-kinase_CS"/>
</dbReference>
<dbReference type="InterPro" id="IPR002478">
    <property type="entry name" value="PUA"/>
</dbReference>
<dbReference type="InterPro" id="IPR015947">
    <property type="entry name" value="PUA-like_sf"/>
</dbReference>
<dbReference type="InterPro" id="IPR036974">
    <property type="entry name" value="PUA_sf"/>
</dbReference>
<dbReference type="NCBIfam" id="TIGR01027">
    <property type="entry name" value="proB"/>
    <property type="match status" value="1"/>
</dbReference>
<dbReference type="PANTHER" id="PTHR43654">
    <property type="entry name" value="GLUTAMATE 5-KINASE"/>
    <property type="match status" value="1"/>
</dbReference>
<dbReference type="PANTHER" id="PTHR43654:SF1">
    <property type="entry name" value="ISOPENTENYL PHOSPHATE KINASE"/>
    <property type="match status" value="1"/>
</dbReference>
<dbReference type="Pfam" id="PF00696">
    <property type="entry name" value="AA_kinase"/>
    <property type="match status" value="1"/>
</dbReference>
<dbReference type="Pfam" id="PF01472">
    <property type="entry name" value="PUA"/>
    <property type="match status" value="1"/>
</dbReference>
<dbReference type="PIRSF" id="PIRSF000729">
    <property type="entry name" value="GK"/>
    <property type="match status" value="1"/>
</dbReference>
<dbReference type="PRINTS" id="PR00474">
    <property type="entry name" value="GLU5KINASE"/>
</dbReference>
<dbReference type="SMART" id="SM00359">
    <property type="entry name" value="PUA"/>
    <property type="match status" value="1"/>
</dbReference>
<dbReference type="SUPFAM" id="SSF53633">
    <property type="entry name" value="Carbamate kinase-like"/>
    <property type="match status" value="1"/>
</dbReference>
<dbReference type="SUPFAM" id="SSF88697">
    <property type="entry name" value="PUA domain-like"/>
    <property type="match status" value="1"/>
</dbReference>
<dbReference type="PROSITE" id="PS00902">
    <property type="entry name" value="GLUTAMATE_5_KINASE"/>
    <property type="match status" value="1"/>
</dbReference>
<dbReference type="PROSITE" id="PS50890">
    <property type="entry name" value="PUA"/>
    <property type="match status" value="1"/>
</dbReference>
<name>PROB_XANC8</name>
<keyword id="KW-0028">Amino-acid biosynthesis</keyword>
<keyword id="KW-0067">ATP-binding</keyword>
<keyword id="KW-0963">Cytoplasm</keyword>
<keyword id="KW-0418">Kinase</keyword>
<keyword id="KW-0547">Nucleotide-binding</keyword>
<keyword id="KW-0641">Proline biosynthesis</keyword>
<keyword id="KW-0808">Transferase</keyword>
<organism>
    <name type="scientific">Xanthomonas campestris pv. campestris (strain 8004)</name>
    <dbReference type="NCBI Taxonomy" id="314565"/>
    <lineage>
        <taxon>Bacteria</taxon>
        <taxon>Pseudomonadati</taxon>
        <taxon>Pseudomonadota</taxon>
        <taxon>Gammaproteobacteria</taxon>
        <taxon>Lysobacterales</taxon>
        <taxon>Lysobacteraceae</taxon>
        <taxon>Xanthomonas</taxon>
    </lineage>
</organism>
<feature type="chain" id="PRO_0000230073" description="Glutamate 5-kinase">
    <location>
        <begin position="1"/>
        <end position="362"/>
    </location>
</feature>
<feature type="domain" description="PUA" evidence="1">
    <location>
        <begin position="267"/>
        <end position="348"/>
    </location>
</feature>
<feature type="binding site" evidence="1">
    <location>
        <position position="3"/>
    </location>
    <ligand>
        <name>ATP</name>
        <dbReference type="ChEBI" id="CHEBI:30616"/>
    </ligand>
</feature>
<feature type="binding site" evidence="1">
    <location>
        <position position="43"/>
    </location>
    <ligand>
        <name>substrate</name>
    </ligand>
</feature>
<feature type="binding site" evidence="1">
    <location>
        <position position="128"/>
    </location>
    <ligand>
        <name>substrate</name>
    </ligand>
</feature>
<feature type="binding site" evidence="1">
    <location>
        <position position="140"/>
    </location>
    <ligand>
        <name>substrate</name>
    </ligand>
</feature>
<feature type="binding site" evidence="1">
    <location>
        <begin position="160"/>
        <end position="161"/>
    </location>
    <ligand>
        <name>ATP</name>
        <dbReference type="ChEBI" id="CHEBI:30616"/>
    </ligand>
</feature>
<feature type="binding site" evidence="1">
    <location>
        <begin position="202"/>
        <end position="208"/>
    </location>
    <ligand>
        <name>ATP</name>
        <dbReference type="ChEBI" id="CHEBI:30616"/>
    </ligand>
</feature>
<proteinExistence type="inferred from homology"/>
<protein>
    <recommendedName>
        <fullName evidence="1">Glutamate 5-kinase</fullName>
        <ecNumber evidence="1">2.7.2.11</ecNumber>
    </recommendedName>
    <alternativeName>
        <fullName evidence="1">Gamma-glutamyl kinase</fullName>
        <shortName evidence="1">GK</shortName>
    </alternativeName>
</protein>